<dbReference type="EC" id="1.6.5.-" evidence="1"/>
<dbReference type="EC" id="1.7.1.17" evidence="1"/>
<dbReference type="EMBL" id="AL596166">
    <property type="protein sequence ID" value="CAC96011.1"/>
    <property type="molecule type" value="Genomic_DNA"/>
</dbReference>
<dbReference type="PIR" id="AC1530">
    <property type="entry name" value="AC1530"/>
</dbReference>
<dbReference type="RefSeq" id="WP_003770984.1">
    <property type="nucleotide sequence ID" value="NC_003212.1"/>
</dbReference>
<dbReference type="SMR" id="Q92DN4"/>
<dbReference type="STRING" id="272626.gene:17565106"/>
<dbReference type="GeneID" id="93234226"/>
<dbReference type="KEGG" id="lin:lin0779"/>
<dbReference type="eggNOG" id="COG1182">
    <property type="taxonomic scope" value="Bacteria"/>
</dbReference>
<dbReference type="HOGENOM" id="CLU_088964_3_1_9"/>
<dbReference type="OrthoDB" id="9805013at2"/>
<dbReference type="Proteomes" id="UP000002513">
    <property type="component" value="Chromosome"/>
</dbReference>
<dbReference type="GO" id="GO:0009055">
    <property type="term" value="F:electron transfer activity"/>
    <property type="evidence" value="ECO:0007669"/>
    <property type="project" value="UniProtKB-UniRule"/>
</dbReference>
<dbReference type="GO" id="GO:0010181">
    <property type="term" value="F:FMN binding"/>
    <property type="evidence" value="ECO:0007669"/>
    <property type="project" value="UniProtKB-UniRule"/>
</dbReference>
<dbReference type="GO" id="GO:0016652">
    <property type="term" value="F:oxidoreductase activity, acting on NAD(P)H as acceptor"/>
    <property type="evidence" value="ECO:0007669"/>
    <property type="project" value="UniProtKB-UniRule"/>
</dbReference>
<dbReference type="GO" id="GO:0016655">
    <property type="term" value="F:oxidoreductase activity, acting on NAD(P)H, quinone or similar compound as acceptor"/>
    <property type="evidence" value="ECO:0007669"/>
    <property type="project" value="InterPro"/>
</dbReference>
<dbReference type="Gene3D" id="3.40.50.360">
    <property type="match status" value="1"/>
</dbReference>
<dbReference type="HAMAP" id="MF_01216">
    <property type="entry name" value="Azoreductase_type1"/>
    <property type="match status" value="1"/>
</dbReference>
<dbReference type="InterPro" id="IPR003680">
    <property type="entry name" value="Flavodoxin_fold"/>
</dbReference>
<dbReference type="InterPro" id="IPR029039">
    <property type="entry name" value="Flavoprotein-like_sf"/>
</dbReference>
<dbReference type="InterPro" id="IPR050104">
    <property type="entry name" value="FMN-dep_NADH:Q_OxRdtase_AzoR1"/>
</dbReference>
<dbReference type="InterPro" id="IPR023048">
    <property type="entry name" value="NADH:quinone_OxRdtase_FMN_depd"/>
</dbReference>
<dbReference type="PANTHER" id="PTHR43741">
    <property type="entry name" value="FMN-DEPENDENT NADH-AZOREDUCTASE 1"/>
    <property type="match status" value="1"/>
</dbReference>
<dbReference type="PANTHER" id="PTHR43741:SF7">
    <property type="entry name" value="FMN-DEPENDENT NADH:QUINONE OXIDOREDUCTASE"/>
    <property type="match status" value="1"/>
</dbReference>
<dbReference type="Pfam" id="PF02525">
    <property type="entry name" value="Flavodoxin_2"/>
    <property type="match status" value="1"/>
</dbReference>
<dbReference type="SUPFAM" id="SSF52218">
    <property type="entry name" value="Flavoproteins"/>
    <property type="match status" value="1"/>
</dbReference>
<name>AZOR2_LISIN</name>
<keyword id="KW-0285">Flavoprotein</keyword>
<keyword id="KW-0288">FMN</keyword>
<keyword id="KW-0520">NAD</keyword>
<keyword id="KW-0560">Oxidoreductase</keyword>
<sequence>MSKVLFIKASPLPNEVSRSSQVAATFIDEYKAKNPSDTVEELVLYNTEVPLLDLELMTAGRELQAGKAFTDLAPDVQKRLNAYNALTEQFLAADKYVFVFPLWNLGIPPLLKAYVDTFVIAGKSFRYTEHGPEALLKGKKAILIHGSGGIYSAGPTSSFTHGEPYLRTILQFIGIDVVPSIFVEGIDHNPSKEAEIVAAAKAVAHESAAEF</sequence>
<accession>Q92DN4</accession>
<gene>
    <name evidence="1" type="primary">azoR2</name>
    <name type="ordered locus">lin0779</name>
</gene>
<reference key="1">
    <citation type="journal article" date="2001" name="Science">
        <title>Comparative genomics of Listeria species.</title>
        <authorList>
            <person name="Glaser P."/>
            <person name="Frangeul L."/>
            <person name="Buchrieser C."/>
            <person name="Rusniok C."/>
            <person name="Amend A."/>
            <person name="Baquero F."/>
            <person name="Berche P."/>
            <person name="Bloecker H."/>
            <person name="Brandt P."/>
            <person name="Chakraborty T."/>
            <person name="Charbit A."/>
            <person name="Chetouani F."/>
            <person name="Couve E."/>
            <person name="de Daruvar A."/>
            <person name="Dehoux P."/>
            <person name="Domann E."/>
            <person name="Dominguez-Bernal G."/>
            <person name="Duchaud E."/>
            <person name="Durant L."/>
            <person name="Dussurget O."/>
            <person name="Entian K.-D."/>
            <person name="Fsihi H."/>
            <person name="Garcia-del Portillo F."/>
            <person name="Garrido P."/>
            <person name="Gautier L."/>
            <person name="Goebel W."/>
            <person name="Gomez-Lopez N."/>
            <person name="Hain T."/>
            <person name="Hauf J."/>
            <person name="Jackson D."/>
            <person name="Jones L.-M."/>
            <person name="Kaerst U."/>
            <person name="Kreft J."/>
            <person name="Kuhn M."/>
            <person name="Kunst F."/>
            <person name="Kurapkat G."/>
            <person name="Madueno E."/>
            <person name="Maitournam A."/>
            <person name="Mata Vicente J."/>
            <person name="Ng E."/>
            <person name="Nedjari H."/>
            <person name="Nordsiek G."/>
            <person name="Novella S."/>
            <person name="de Pablos B."/>
            <person name="Perez-Diaz J.-C."/>
            <person name="Purcell R."/>
            <person name="Remmel B."/>
            <person name="Rose M."/>
            <person name="Schlueter T."/>
            <person name="Simoes N."/>
            <person name="Tierrez A."/>
            <person name="Vazquez-Boland J.-A."/>
            <person name="Voss H."/>
            <person name="Wehland J."/>
            <person name="Cossart P."/>
        </authorList>
    </citation>
    <scope>NUCLEOTIDE SEQUENCE [LARGE SCALE GENOMIC DNA]</scope>
    <source>
        <strain>ATCC BAA-680 / CLIP 11262</strain>
    </source>
</reference>
<protein>
    <recommendedName>
        <fullName evidence="1">FMN-dependent NADH:quinone oxidoreductase 2</fullName>
        <ecNumber evidence="1">1.6.5.-</ecNumber>
    </recommendedName>
    <alternativeName>
        <fullName evidence="1">Azo-dye reductase 2</fullName>
    </alternativeName>
    <alternativeName>
        <fullName evidence="1">FMN-dependent NADH-azo compound oxidoreductase 2</fullName>
    </alternativeName>
    <alternativeName>
        <fullName evidence="1">FMN-dependent NADH-azoreductase 2</fullName>
        <ecNumber evidence="1">1.7.1.17</ecNumber>
    </alternativeName>
</protein>
<organism>
    <name type="scientific">Listeria innocua serovar 6a (strain ATCC BAA-680 / CLIP 11262)</name>
    <dbReference type="NCBI Taxonomy" id="272626"/>
    <lineage>
        <taxon>Bacteria</taxon>
        <taxon>Bacillati</taxon>
        <taxon>Bacillota</taxon>
        <taxon>Bacilli</taxon>
        <taxon>Bacillales</taxon>
        <taxon>Listeriaceae</taxon>
        <taxon>Listeria</taxon>
    </lineage>
</organism>
<feature type="chain" id="PRO_0000166339" description="FMN-dependent NADH:quinone oxidoreductase 2">
    <location>
        <begin position="1"/>
        <end position="211"/>
    </location>
</feature>
<feature type="binding site" evidence="1">
    <location>
        <position position="10"/>
    </location>
    <ligand>
        <name>FMN</name>
        <dbReference type="ChEBI" id="CHEBI:58210"/>
    </ligand>
</feature>
<feature type="binding site" evidence="1">
    <location>
        <begin position="17"/>
        <end position="19"/>
    </location>
    <ligand>
        <name>FMN</name>
        <dbReference type="ChEBI" id="CHEBI:58210"/>
    </ligand>
</feature>
<proteinExistence type="inferred from homology"/>
<evidence type="ECO:0000255" key="1">
    <source>
        <dbReference type="HAMAP-Rule" id="MF_01216"/>
    </source>
</evidence>
<comment type="function">
    <text evidence="1">Quinone reductase that provides resistance to thiol-specific stress caused by electrophilic quinones.</text>
</comment>
<comment type="function">
    <text evidence="1">Also exhibits azoreductase activity. Catalyzes the reductive cleavage of the azo bond in aromatic azo compounds to the corresponding amines.</text>
</comment>
<comment type="catalytic activity">
    <reaction evidence="1">
        <text>2 a quinone + NADH + H(+) = 2 a 1,4-benzosemiquinone + NAD(+)</text>
        <dbReference type="Rhea" id="RHEA:65952"/>
        <dbReference type="ChEBI" id="CHEBI:15378"/>
        <dbReference type="ChEBI" id="CHEBI:57540"/>
        <dbReference type="ChEBI" id="CHEBI:57945"/>
        <dbReference type="ChEBI" id="CHEBI:132124"/>
        <dbReference type="ChEBI" id="CHEBI:134225"/>
    </reaction>
</comment>
<comment type="catalytic activity">
    <reaction evidence="1">
        <text>N,N-dimethyl-1,4-phenylenediamine + anthranilate + 2 NAD(+) = 2-(4-dimethylaminophenyl)diazenylbenzoate + 2 NADH + 2 H(+)</text>
        <dbReference type="Rhea" id="RHEA:55872"/>
        <dbReference type="ChEBI" id="CHEBI:15378"/>
        <dbReference type="ChEBI" id="CHEBI:15783"/>
        <dbReference type="ChEBI" id="CHEBI:16567"/>
        <dbReference type="ChEBI" id="CHEBI:57540"/>
        <dbReference type="ChEBI" id="CHEBI:57945"/>
        <dbReference type="ChEBI" id="CHEBI:71579"/>
        <dbReference type="EC" id="1.7.1.17"/>
    </reaction>
</comment>
<comment type="cofactor">
    <cofactor evidence="1">
        <name>FMN</name>
        <dbReference type="ChEBI" id="CHEBI:58210"/>
    </cofactor>
    <text evidence="1">Binds 1 FMN per subunit.</text>
</comment>
<comment type="subunit">
    <text evidence="1">Homodimer.</text>
</comment>
<comment type="similarity">
    <text evidence="1">Belongs to the azoreductase type 1 family.</text>
</comment>